<protein>
    <recommendedName>
        <fullName evidence="1">Inorganic pyrophosphatase</fullName>
        <ecNumber evidence="1">3.6.1.1</ecNumber>
    </recommendedName>
    <alternativeName>
        <fullName evidence="1">Pyrophosphate phospho-hydrolase</fullName>
        <shortName evidence="1">PPase</shortName>
    </alternativeName>
</protein>
<organism>
    <name type="scientific">Chlamydia muridarum (strain MoPn / Nigg)</name>
    <dbReference type="NCBI Taxonomy" id="243161"/>
    <lineage>
        <taxon>Bacteria</taxon>
        <taxon>Pseudomonadati</taxon>
        <taxon>Chlamydiota</taxon>
        <taxon>Chlamydiia</taxon>
        <taxon>Chlamydiales</taxon>
        <taxon>Chlamydiaceae</taxon>
        <taxon>Chlamydia/Chlamydophila group</taxon>
        <taxon>Chlamydia</taxon>
    </lineage>
</organism>
<reference key="1">
    <citation type="journal article" date="2000" name="Nucleic Acids Res.">
        <title>Genome sequences of Chlamydia trachomatis MoPn and Chlamydia pneumoniae AR39.</title>
        <authorList>
            <person name="Read T.D."/>
            <person name="Brunham R.C."/>
            <person name="Shen C."/>
            <person name="Gill S.R."/>
            <person name="Heidelberg J.F."/>
            <person name="White O."/>
            <person name="Hickey E.K."/>
            <person name="Peterson J.D."/>
            <person name="Utterback T.R."/>
            <person name="Berry K.J."/>
            <person name="Bass S."/>
            <person name="Linher K.D."/>
            <person name="Weidman J.F."/>
            <person name="Khouri H.M."/>
            <person name="Craven B."/>
            <person name="Bowman C."/>
            <person name="Dodson R.J."/>
            <person name="Gwinn M.L."/>
            <person name="Nelson W.C."/>
            <person name="DeBoy R.T."/>
            <person name="Kolonay J.F."/>
            <person name="McClarty G."/>
            <person name="Salzberg S.L."/>
            <person name="Eisen J.A."/>
            <person name="Fraser C.M."/>
        </authorList>
    </citation>
    <scope>NUCLEOTIDE SEQUENCE [LARGE SCALE GENOMIC DNA]</scope>
    <source>
        <strain>MoPn / Nigg</strain>
    </source>
</reference>
<sequence length="209" mass="23310">MSKTPLSIVHPWHGPVLTRDDYESLCCYIEITPSDSVKFELDKETGLLKVDRPQKFSNFCPCLYGLLPKTYCGDLSGEYSGQQSNRDNIKGDGDPLDICVLTEKNITQGNILLQARPIGGIRILDSGEADDKIIAVLEDDLVYGAMEDISDCPGSVLDMIQHYFLTYKATPESLIQAKPAKIEIIGLYGKKEAQKVIRLAHEDYCNLFM</sequence>
<keyword id="KW-0963">Cytoplasm</keyword>
<keyword id="KW-0378">Hydrolase</keyword>
<keyword id="KW-0460">Magnesium</keyword>
<keyword id="KW-0479">Metal-binding</keyword>
<gene>
    <name evidence="1" type="primary">ppa</name>
    <name type="ordered locus">TC_0153</name>
</gene>
<accession>Q9PLF1</accession>
<proteinExistence type="inferred from homology"/>
<feature type="chain" id="PRO_0000137490" description="Inorganic pyrophosphatase">
    <location>
        <begin position="1"/>
        <end position="209"/>
    </location>
</feature>
<feature type="binding site" evidence="1">
    <location>
        <position position="38"/>
    </location>
    <ligand>
        <name>substrate</name>
    </ligand>
</feature>
<feature type="binding site" evidence="1">
    <location>
        <position position="52"/>
    </location>
    <ligand>
        <name>substrate</name>
    </ligand>
</feature>
<feature type="binding site" evidence="1">
    <location>
        <position position="64"/>
    </location>
    <ligand>
        <name>substrate</name>
    </ligand>
</feature>
<feature type="binding site" evidence="1">
    <location>
        <position position="92"/>
    </location>
    <ligand>
        <name>Mg(2+)</name>
        <dbReference type="ChEBI" id="CHEBI:18420"/>
        <label>1</label>
    </ligand>
</feature>
<feature type="binding site" evidence="1">
    <location>
        <position position="97"/>
    </location>
    <ligand>
        <name>Mg(2+)</name>
        <dbReference type="ChEBI" id="CHEBI:18420"/>
        <label>1</label>
    </ligand>
</feature>
<feature type="binding site" evidence="1">
    <location>
        <position position="97"/>
    </location>
    <ligand>
        <name>Mg(2+)</name>
        <dbReference type="ChEBI" id="CHEBI:18420"/>
        <label>2</label>
    </ligand>
</feature>
<feature type="binding site" evidence="1">
    <location>
        <position position="130"/>
    </location>
    <ligand>
        <name>Mg(2+)</name>
        <dbReference type="ChEBI" id="CHEBI:18420"/>
        <label>1</label>
    </ligand>
</feature>
<feature type="binding site" evidence="1">
    <location>
        <position position="167"/>
    </location>
    <ligand>
        <name>substrate</name>
    </ligand>
</feature>
<evidence type="ECO:0000255" key="1">
    <source>
        <dbReference type="HAMAP-Rule" id="MF_00209"/>
    </source>
</evidence>
<comment type="function">
    <text evidence="1">Catalyzes the hydrolysis of inorganic pyrophosphate (PPi) forming two phosphate ions.</text>
</comment>
<comment type="catalytic activity">
    <reaction evidence="1">
        <text>diphosphate + H2O = 2 phosphate + H(+)</text>
        <dbReference type="Rhea" id="RHEA:24576"/>
        <dbReference type="ChEBI" id="CHEBI:15377"/>
        <dbReference type="ChEBI" id="CHEBI:15378"/>
        <dbReference type="ChEBI" id="CHEBI:33019"/>
        <dbReference type="ChEBI" id="CHEBI:43474"/>
        <dbReference type="EC" id="3.6.1.1"/>
    </reaction>
</comment>
<comment type="cofactor">
    <cofactor evidence="1">
        <name>Mg(2+)</name>
        <dbReference type="ChEBI" id="CHEBI:18420"/>
    </cofactor>
</comment>
<comment type="subunit">
    <text evidence="1">Homohexamer.</text>
</comment>
<comment type="subcellular location">
    <subcellularLocation>
        <location evidence="1">Cytoplasm</location>
    </subcellularLocation>
</comment>
<comment type="similarity">
    <text evidence="1">Belongs to the PPase family.</text>
</comment>
<dbReference type="EC" id="3.6.1.1" evidence="1"/>
<dbReference type="EMBL" id="AE002160">
    <property type="protein sequence ID" value="AAF39030.1"/>
    <property type="molecule type" value="Genomic_DNA"/>
</dbReference>
<dbReference type="PIR" id="A81736">
    <property type="entry name" value="A81736"/>
</dbReference>
<dbReference type="RefSeq" id="WP_010229535.1">
    <property type="nucleotide sequence ID" value="NZ_CP063055.1"/>
</dbReference>
<dbReference type="SMR" id="Q9PLF1"/>
<dbReference type="GeneID" id="1245687"/>
<dbReference type="KEGG" id="cmu:TC_0153"/>
<dbReference type="eggNOG" id="COG0221">
    <property type="taxonomic scope" value="Bacteria"/>
</dbReference>
<dbReference type="HOGENOM" id="CLU_073198_2_1_0"/>
<dbReference type="OrthoDB" id="5187599at2"/>
<dbReference type="Proteomes" id="UP000000800">
    <property type="component" value="Chromosome"/>
</dbReference>
<dbReference type="GO" id="GO:0005737">
    <property type="term" value="C:cytoplasm"/>
    <property type="evidence" value="ECO:0007669"/>
    <property type="project" value="UniProtKB-SubCell"/>
</dbReference>
<dbReference type="GO" id="GO:0004427">
    <property type="term" value="F:inorganic diphosphate phosphatase activity"/>
    <property type="evidence" value="ECO:0007669"/>
    <property type="project" value="UniProtKB-UniRule"/>
</dbReference>
<dbReference type="GO" id="GO:0000287">
    <property type="term" value="F:magnesium ion binding"/>
    <property type="evidence" value="ECO:0007669"/>
    <property type="project" value="UniProtKB-UniRule"/>
</dbReference>
<dbReference type="GO" id="GO:0006796">
    <property type="term" value="P:phosphate-containing compound metabolic process"/>
    <property type="evidence" value="ECO:0007669"/>
    <property type="project" value="InterPro"/>
</dbReference>
<dbReference type="CDD" id="cd00412">
    <property type="entry name" value="pyrophosphatase"/>
    <property type="match status" value="1"/>
</dbReference>
<dbReference type="Gene3D" id="3.90.80.10">
    <property type="entry name" value="Inorganic pyrophosphatase"/>
    <property type="match status" value="1"/>
</dbReference>
<dbReference type="HAMAP" id="MF_00209">
    <property type="entry name" value="Inorganic_PPase"/>
    <property type="match status" value="1"/>
</dbReference>
<dbReference type="InterPro" id="IPR008162">
    <property type="entry name" value="Pyrophosphatase"/>
</dbReference>
<dbReference type="InterPro" id="IPR036649">
    <property type="entry name" value="Pyrophosphatase_sf"/>
</dbReference>
<dbReference type="NCBIfam" id="NF001886">
    <property type="entry name" value="PRK00642.1"/>
    <property type="match status" value="1"/>
</dbReference>
<dbReference type="PANTHER" id="PTHR10286">
    <property type="entry name" value="INORGANIC PYROPHOSPHATASE"/>
    <property type="match status" value="1"/>
</dbReference>
<dbReference type="Pfam" id="PF00719">
    <property type="entry name" value="Pyrophosphatase"/>
    <property type="match status" value="1"/>
</dbReference>
<dbReference type="SUPFAM" id="SSF50324">
    <property type="entry name" value="Inorganic pyrophosphatase"/>
    <property type="match status" value="1"/>
</dbReference>
<dbReference type="PROSITE" id="PS00387">
    <property type="entry name" value="PPASE"/>
    <property type="match status" value="1"/>
</dbReference>
<name>IPYR_CHLMU</name>